<comment type="function">
    <text evidence="1">Catalyzes the deamination of 5-methylthioadenosine and S-adenosyl-L-homocysteine into 5-methylthioinosine and S-inosyl-L-homocysteine, respectively. Is also able to deaminate adenosine.</text>
</comment>
<comment type="catalytic activity">
    <reaction evidence="1">
        <text>S-adenosyl-L-homocysteine + H2O + H(+) = S-inosyl-L-homocysteine + NH4(+)</text>
        <dbReference type="Rhea" id="RHEA:20716"/>
        <dbReference type="ChEBI" id="CHEBI:15377"/>
        <dbReference type="ChEBI" id="CHEBI:15378"/>
        <dbReference type="ChEBI" id="CHEBI:28938"/>
        <dbReference type="ChEBI" id="CHEBI:57856"/>
        <dbReference type="ChEBI" id="CHEBI:57985"/>
        <dbReference type="EC" id="3.5.4.28"/>
    </reaction>
</comment>
<comment type="catalytic activity">
    <reaction evidence="1">
        <text>S-methyl-5'-thioadenosine + H2O + H(+) = S-methyl-5'-thioinosine + NH4(+)</text>
        <dbReference type="Rhea" id="RHEA:25025"/>
        <dbReference type="ChEBI" id="CHEBI:15377"/>
        <dbReference type="ChEBI" id="CHEBI:15378"/>
        <dbReference type="ChEBI" id="CHEBI:17509"/>
        <dbReference type="ChEBI" id="CHEBI:28938"/>
        <dbReference type="ChEBI" id="CHEBI:48595"/>
        <dbReference type="EC" id="3.5.4.31"/>
    </reaction>
</comment>
<comment type="cofactor">
    <cofactor evidence="1">
        <name>Zn(2+)</name>
        <dbReference type="ChEBI" id="CHEBI:29105"/>
    </cofactor>
    <text evidence="1">Binds 1 zinc ion per subunit.</text>
</comment>
<comment type="similarity">
    <text evidence="1">Belongs to the metallo-dependent hydrolases superfamily. MTA/SAH deaminase family.</text>
</comment>
<accession>Q18EV7</accession>
<dbReference type="EC" id="3.5.4.28" evidence="1"/>
<dbReference type="EC" id="3.5.4.31" evidence="1"/>
<dbReference type="EMBL" id="AM180088">
    <property type="protein sequence ID" value="CAJ53510.1"/>
    <property type="molecule type" value="Genomic_DNA"/>
</dbReference>
<dbReference type="RefSeq" id="WP_011572607.1">
    <property type="nucleotide sequence ID" value="NC_008212.1"/>
</dbReference>
<dbReference type="SMR" id="Q18EV7"/>
<dbReference type="STRING" id="362976.HQ_3413A"/>
<dbReference type="GeneID" id="4194877"/>
<dbReference type="KEGG" id="hwa:HQ_3413A"/>
<dbReference type="eggNOG" id="arCOG00695">
    <property type="taxonomic scope" value="Archaea"/>
</dbReference>
<dbReference type="HOGENOM" id="CLU_012358_2_1_2"/>
<dbReference type="Proteomes" id="UP000001975">
    <property type="component" value="Chromosome"/>
</dbReference>
<dbReference type="GO" id="GO:0090614">
    <property type="term" value="F:5'-methylthioadenosine deaminase activity"/>
    <property type="evidence" value="ECO:0007669"/>
    <property type="project" value="UniProtKB-UniRule"/>
</dbReference>
<dbReference type="GO" id="GO:0046872">
    <property type="term" value="F:metal ion binding"/>
    <property type="evidence" value="ECO:0007669"/>
    <property type="project" value="UniProtKB-KW"/>
</dbReference>
<dbReference type="GO" id="GO:0050270">
    <property type="term" value="F:S-adenosylhomocysteine deaminase activity"/>
    <property type="evidence" value="ECO:0007669"/>
    <property type="project" value="UniProtKB-UniRule"/>
</dbReference>
<dbReference type="CDD" id="cd01298">
    <property type="entry name" value="ATZ_TRZ_like"/>
    <property type="match status" value="1"/>
</dbReference>
<dbReference type="FunFam" id="3.20.20.140:FF:000014">
    <property type="entry name" value="5-methylthioadenosine/S-adenosylhomocysteine deaminase"/>
    <property type="match status" value="1"/>
</dbReference>
<dbReference type="Gene3D" id="3.20.20.140">
    <property type="entry name" value="Metal-dependent hydrolases"/>
    <property type="match status" value="1"/>
</dbReference>
<dbReference type="Gene3D" id="2.30.40.10">
    <property type="entry name" value="Urease, subunit C, domain 1"/>
    <property type="match status" value="1"/>
</dbReference>
<dbReference type="HAMAP" id="MF_01281">
    <property type="entry name" value="MTA_SAH_deamin"/>
    <property type="match status" value="1"/>
</dbReference>
<dbReference type="InterPro" id="IPR006680">
    <property type="entry name" value="Amidohydro-rel"/>
</dbReference>
<dbReference type="InterPro" id="IPR023512">
    <property type="entry name" value="Deaminase_MtaD/DadD"/>
</dbReference>
<dbReference type="InterPro" id="IPR011059">
    <property type="entry name" value="Metal-dep_hydrolase_composite"/>
</dbReference>
<dbReference type="InterPro" id="IPR032466">
    <property type="entry name" value="Metal_Hydrolase"/>
</dbReference>
<dbReference type="InterPro" id="IPR050287">
    <property type="entry name" value="MTA/SAH_deaminase"/>
</dbReference>
<dbReference type="PANTHER" id="PTHR43794:SF11">
    <property type="entry name" value="AMIDOHYDROLASE-RELATED DOMAIN-CONTAINING PROTEIN"/>
    <property type="match status" value="1"/>
</dbReference>
<dbReference type="PANTHER" id="PTHR43794">
    <property type="entry name" value="AMINOHYDROLASE SSNA-RELATED"/>
    <property type="match status" value="1"/>
</dbReference>
<dbReference type="Pfam" id="PF01979">
    <property type="entry name" value="Amidohydro_1"/>
    <property type="match status" value="1"/>
</dbReference>
<dbReference type="SUPFAM" id="SSF51338">
    <property type="entry name" value="Composite domain of metallo-dependent hydrolases"/>
    <property type="match status" value="1"/>
</dbReference>
<dbReference type="SUPFAM" id="SSF51556">
    <property type="entry name" value="Metallo-dependent hydrolases"/>
    <property type="match status" value="1"/>
</dbReference>
<proteinExistence type="inferred from homology"/>
<evidence type="ECO:0000255" key="1">
    <source>
        <dbReference type="HAMAP-Rule" id="MF_01281"/>
    </source>
</evidence>
<gene>
    <name evidence="1" type="primary">mtaD</name>
    <name type="ordered locus">HQ_3413A</name>
</gene>
<sequence>MTTETLIITGGHVLQLGQDPGIIEANIRVNCITGKITNIDEDPVSAQQRDANDEIIRTLDAAGCVVMPGLVNAHTHAAMTLLRGYADDKPLQAWLREDIWPAEAEMTPTGVRAGTELAIVEMIRSGTTAFADMYFHVPEVVAAIKNAGVRARVGHGVVTAGKDDEAARNDLNKGLEVAQAYDGAADDRIQTAFMPHSLTTVGEEYLQEAVSEARQDNIPIHYHANETRSEVDPIVDNHNKRPLTYASGLDMLSSSDFLAHGVHLETDEIDQLAEAGASLVHCPASNMKLASGIAPIPALLDAGVTVALGTDGAASNNDLDMFDELRDAAMLGKIGADDAAAVPAAQAIHMATAGGADALGLPGGQIKEEAVADLIVVDLDSPHLTPTHNIISHLAYAARGSDVKHTVCDGTVLMQNREIQTIDVDAVVETAETQAQSLIQRMS</sequence>
<feature type="chain" id="PRO_0000312468" description="5-methylthioadenosine/S-adenosylhomocysteine deaminase">
    <location>
        <begin position="1"/>
        <end position="443"/>
    </location>
</feature>
<feature type="binding site" evidence="1">
    <location>
        <position position="74"/>
    </location>
    <ligand>
        <name>Zn(2+)</name>
        <dbReference type="ChEBI" id="CHEBI:29105"/>
    </ligand>
</feature>
<feature type="binding site" evidence="1">
    <location>
        <position position="76"/>
    </location>
    <ligand>
        <name>Zn(2+)</name>
        <dbReference type="ChEBI" id="CHEBI:29105"/>
    </ligand>
</feature>
<feature type="binding site" evidence="1">
    <location>
        <position position="103"/>
    </location>
    <ligand>
        <name>substrate</name>
    </ligand>
</feature>
<feature type="binding site" evidence="1">
    <location>
        <position position="196"/>
    </location>
    <ligand>
        <name>substrate</name>
    </ligand>
</feature>
<feature type="binding site" evidence="1">
    <location>
        <position position="223"/>
    </location>
    <ligand>
        <name>Zn(2+)</name>
        <dbReference type="ChEBI" id="CHEBI:29105"/>
    </ligand>
</feature>
<feature type="binding site" evidence="1">
    <location>
        <position position="226"/>
    </location>
    <ligand>
        <name>substrate</name>
    </ligand>
</feature>
<feature type="binding site" evidence="1">
    <location>
        <position position="311"/>
    </location>
    <ligand>
        <name>substrate</name>
    </ligand>
</feature>
<feature type="binding site" evidence="1">
    <location>
        <position position="311"/>
    </location>
    <ligand>
        <name>Zn(2+)</name>
        <dbReference type="ChEBI" id="CHEBI:29105"/>
    </ligand>
</feature>
<keyword id="KW-0378">Hydrolase</keyword>
<keyword id="KW-0479">Metal-binding</keyword>
<keyword id="KW-1185">Reference proteome</keyword>
<keyword id="KW-0862">Zinc</keyword>
<name>MTAD_HALWD</name>
<protein>
    <recommendedName>
        <fullName evidence="1">5-methylthioadenosine/S-adenosylhomocysteine deaminase</fullName>
        <shortName evidence="1">MTA/SAH deaminase</shortName>
        <ecNumber evidence="1">3.5.4.28</ecNumber>
        <ecNumber evidence="1">3.5.4.31</ecNumber>
    </recommendedName>
</protein>
<reference key="1">
    <citation type="journal article" date="2006" name="BMC Genomics">
        <title>The genome of the square archaeon Haloquadratum walsbyi: life at the limits of water activity.</title>
        <authorList>
            <person name="Bolhuis H."/>
            <person name="Palm P."/>
            <person name="Wende A."/>
            <person name="Falb M."/>
            <person name="Rampp M."/>
            <person name="Rodriguez-Valera F."/>
            <person name="Pfeiffer F."/>
            <person name="Oesterhelt D."/>
        </authorList>
    </citation>
    <scope>NUCLEOTIDE SEQUENCE [LARGE SCALE GENOMIC DNA]</scope>
    <source>
        <strain>DSM 16790 / HBSQ001</strain>
    </source>
</reference>
<organism>
    <name type="scientific">Haloquadratum walsbyi (strain DSM 16790 / HBSQ001)</name>
    <dbReference type="NCBI Taxonomy" id="362976"/>
    <lineage>
        <taxon>Archaea</taxon>
        <taxon>Methanobacteriati</taxon>
        <taxon>Methanobacteriota</taxon>
        <taxon>Stenosarchaea group</taxon>
        <taxon>Halobacteria</taxon>
        <taxon>Halobacteriales</taxon>
        <taxon>Haloferacaceae</taxon>
        <taxon>Haloquadratum</taxon>
    </lineage>
</organism>